<keyword id="KW-0325">Glycoprotein</keyword>
<keyword id="KW-0472">Membrane</keyword>
<keyword id="KW-0571">Peptide transport</keyword>
<keyword id="KW-0653">Protein transport</keyword>
<keyword id="KW-1185">Reference proteome</keyword>
<keyword id="KW-0812">Transmembrane</keyword>
<keyword id="KW-1133">Transmembrane helix</keyword>
<keyword id="KW-0813">Transport</keyword>
<sequence length="701" mass="77967">MEEKSLLQKLRSYPPAVFFMLGNEFCERFSFYGMKTILFIYLITEHEFSPSKATFIYHLFTCIAYLTPLIGSIMADSVFGRFKVILYGSSIYVVGHVLLSLGAVPFLSYPIRSSLDFSGLFVIAFATGCIKPCVSAFAADQFTEDQKDLRSQFFSFFYFAINGGSLFAIIITPILRGRVQCFGNAHCFPLAFGVPGVLMLLALILFLMGWSMYKKHPPSKENVGSKVVAVIYTSLRKMVGGASRDKPVTHWLDHAAPEHSQKMIDSTRGLLNVAVIFCPLIFFWALFDQQGSTWVLQARRLDGRVGHFSILPEQIHAINPVCVLILVPIFEGWVYPALRKITRVTPLRKMAVGGLLTAFSFAIAGVLQLKVNETMEFPPSLGRIYLQRVGNESLISDFRYKSDGRLIGDGMLPKGRTELDAGIYTFNTGLKNESQEIDISTPNKGYVMAVFRLKDAVEVVKFDYKVEKTDNGATRVFVVTAREDADTLVYAINKKGKILSSCELKSGSYVDVIPGIISDPNVRLYWGPKNSCSGVDCPNTVTLNAQMGAVHVLHIHPSTTEGDFNLLVRPNSVSILWSLPQYIIITLGEVLLSVTGLEFAYSQAAPNMKSVLTAMWLLTVFAGNLIDMMISGTRLIPHPALEFFFYSTLMVIVMGVFILLAMQYTYVEDNDDEITITESEKKDVIALTEIESGTATSDKKE</sequence>
<reference key="1">
    <citation type="journal article" date="2000" name="J. Biol. Chem.">
        <title>A novel H(+)-coupled oligopeptide transporter (OPT3) from Caenorhabditis elegans with a predominant function as a H(+) channel and an exclusive expression in neurons.</title>
        <authorList>
            <person name="Fei Y.J."/>
            <person name="Romero M.F."/>
            <person name="Krause M."/>
            <person name="Liu J.C."/>
            <person name="Huang W."/>
            <person name="Ganapathy V."/>
            <person name="Leibach F.H."/>
        </authorList>
    </citation>
    <scope>NUCLEOTIDE SEQUENCE [MRNA]</scope>
    <scope>FUNCTION</scope>
    <scope>TISSUE SPECIFICITY</scope>
    <scope>DEVELOPMENTAL STAGE</scope>
    <source>
        <strain>Bristol N2</strain>
    </source>
</reference>
<reference key="2">
    <citation type="journal article" date="1998" name="Science">
        <title>Genome sequence of the nematode C. elegans: a platform for investigating biology.</title>
        <authorList>
            <consortium name="The C. elegans sequencing consortium"/>
        </authorList>
    </citation>
    <scope>NUCLEOTIDE SEQUENCE [LARGE SCALE GENOMIC DNA]</scope>
    <source>
        <strain>Bristol N2</strain>
    </source>
</reference>
<reference key="3">
    <citation type="journal article" date="2007" name="Mol. Cell. Proteomics">
        <title>Proteomics reveals N-linked glycoprotein diversity in Caenorhabditis elegans and suggests an atypical translocation mechanism for integral membrane proteins.</title>
        <authorList>
            <person name="Kaji H."/>
            <person name="Kamiie J."/>
            <person name="Kawakami H."/>
            <person name="Kido K."/>
            <person name="Yamauchi Y."/>
            <person name="Shinkawa T."/>
            <person name="Taoka M."/>
            <person name="Takahashi N."/>
            <person name="Isobe T."/>
        </authorList>
    </citation>
    <scope>GLYCOSYLATION [LARGE SCALE ANALYSIS] AT ASN-391 AND ASN-432</scope>
    <scope>IDENTIFICATION BY MASS SPECTROMETRY</scope>
    <source>
        <strain>Bristol N2</strain>
    </source>
</reference>
<organism>
    <name type="scientific">Caenorhabditis elegans</name>
    <dbReference type="NCBI Taxonomy" id="6239"/>
    <lineage>
        <taxon>Eukaryota</taxon>
        <taxon>Metazoa</taxon>
        <taxon>Ecdysozoa</taxon>
        <taxon>Nematoda</taxon>
        <taxon>Chromadorea</taxon>
        <taxon>Rhabditida</taxon>
        <taxon>Rhabditina</taxon>
        <taxon>Rhabditomorpha</taxon>
        <taxon>Rhabditoidea</taxon>
        <taxon>Rhabditidae</taxon>
        <taxon>Peloderinae</taxon>
        <taxon>Caenorhabditis</taxon>
    </lineage>
</organism>
<accession>O01840</accession>
<accession>Q9NJH8</accession>
<evidence type="ECO:0000255" key="1"/>
<evidence type="ECO:0000269" key="2">
    <source>
    </source>
</evidence>
<evidence type="ECO:0000269" key="3">
    <source>
    </source>
</evidence>
<evidence type="ECO:0000305" key="4"/>
<gene>
    <name type="primary">pept-3</name>
    <name type="synonym">opt-3</name>
    <name type="ORF">F56F4.5</name>
</gene>
<proteinExistence type="evidence at protein level"/>
<dbReference type="EMBL" id="AF142441">
    <property type="protein sequence ID" value="AAF66614.1"/>
    <property type="molecule type" value="mRNA"/>
</dbReference>
<dbReference type="EMBL" id="FO081494">
    <property type="protein sequence ID" value="CCD71980.1"/>
    <property type="molecule type" value="Genomic_DNA"/>
</dbReference>
<dbReference type="PIR" id="T15235">
    <property type="entry name" value="T15235"/>
</dbReference>
<dbReference type="RefSeq" id="NP_491767.3">
    <property type="nucleotide sequence ID" value="NM_059366.5"/>
</dbReference>
<dbReference type="SMR" id="O01840"/>
<dbReference type="BioGRID" id="37751">
    <property type="interactions" value="1"/>
</dbReference>
<dbReference type="DIP" id="DIP-26802N"/>
<dbReference type="FunCoup" id="O01840">
    <property type="interactions" value="46"/>
</dbReference>
<dbReference type="STRING" id="6239.F56F4.5.1"/>
<dbReference type="TCDB" id="2.A.17.4.10">
    <property type="family name" value="the proton-dependent oligopeptide transporter (pot/ptr) family"/>
</dbReference>
<dbReference type="GlyCosmos" id="O01840">
    <property type="glycosylation" value="2 sites, No reported glycans"/>
</dbReference>
<dbReference type="iPTMnet" id="O01840"/>
<dbReference type="PaxDb" id="6239-F56F4.5"/>
<dbReference type="PeptideAtlas" id="O01840"/>
<dbReference type="EnsemblMetazoa" id="F56F4.5.1">
    <property type="protein sequence ID" value="F56F4.5.1"/>
    <property type="gene ID" value="WBGene00003878"/>
</dbReference>
<dbReference type="GeneID" id="172298"/>
<dbReference type="KEGG" id="cel:CELE_F56F4.5"/>
<dbReference type="UCSC" id="F56F4.5">
    <property type="organism name" value="c. elegans"/>
</dbReference>
<dbReference type="AGR" id="WB:WBGene00003878"/>
<dbReference type="CTD" id="172298"/>
<dbReference type="WormBase" id="F56F4.5">
    <property type="protein sequence ID" value="CE11268"/>
    <property type="gene ID" value="WBGene00003878"/>
    <property type="gene designation" value="pept-3"/>
</dbReference>
<dbReference type="eggNOG" id="KOG1237">
    <property type="taxonomic scope" value="Eukaryota"/>
</dbReference>
<dbReference type="HOGENOM" id="CLU_004790_3_0_1"/>
<dbReference type="InParanoid" id="O01840"/>
<dbReference type="OMA" id="PPAVFFM"/>
<dbReference type="OrthoDB" id="205993at2759"/>
<dbReference type="PhylomeDB" id="O01840"/>
<dbReference type="Reactome" id="R-CEL-427975">
    <property type="pathway name" value="Proton/oligopeptide cotransporters"/>
</dbReference>
<dbReference type="PRO" id="PR:O01840"/>
<dbReference type="Proteomes" id="UP000001940">
    <property type="component" value="Chromosome I"/>
</dbReference>
<dbReference type="Bgee" id="WBGene00003878">
    <property type="expression patterns" value="Expressed in larva and 3 other cell types or tissues"/>
</dbReference>
<dbReference type="GO" id="GO:0016324">
    <property type="term" value="C:apical plasma membrane"/>
    <property type="evidence" value="ECO:0000318"/>
    <property type="project" value="GO_Central"/>
</dbReference>
<dbReference type="GO" id="GO:0005886">
    <property type="term" value="C:plasma membrane"/>
    <property type="evidence" value="ECO:0000318"/>
    <property type="project" value="GO_Central"/>
</dbReference>
<dbReference type="GO" id="GO:0071916">
    <property type="term" value="F:dipeptide transmembrane transporter activity"/>
    <property type="evidence" value="ECO:0000314"/>
    <property type="project" value="WormBase"/>
</dbReference>
<dbReference type="GO" id="GO:0015252">
    <property type="term" value="F:proton channel activity"/>
    <property type="evidence" value="ECO:0000314"/>
    <property type="project" value="WormBase"/>
</dbReference>
<dbReference type="GO" id="GO:0140206">
    <property type="term" value="P:dipeptide import across plasma membrane"/>
    <property type="evidence" value="ECO:0000318"/>
    <property type="project" value="GO_Central"/>
</dbReference>
<dbReference type="GO" id="GO:0042938">
    <property type="term" value="P:dipeptide transport"/>
    <property type="evidence" value="ECO:0000314"/>
    <property type="project" value="WormBase"/>
</dbReference>
<dbReference type="GO" id="GO:0015031">
    <property type="term" value="P:protein transport"/>
    <property type="evidence" value="ECO:0007669"/>
    <property type="project" value="UniProtKB-KW"/>
</dbReference>
<dbReference type="GO" id="GO:1902600">
    <property type="term" value="P:proton transmembrane transport"/>
    <property type="evidence" value="ECO:0000314"/>
    <property type="project" value="WormBase"/>
</dbReference>
<dbReference type="CDD" id="cd17347">
    <property type="entry name" value="MFS_SLC15A1_2_like"/>
    <property type="match status" value="1"/>
</dbReference>
<dbReference type="FunFam" id="1.20.1250.20:FF:000612">
    <property type="entry name" value="Peptide transporter 3"/>
    <property type="match status" value="1"/>
</dbReference>
<dbReference type="Gene3D" id="1.20.1250.20">
    <property type="entry name" value="MFS general substrate transporter like domains"/>
    <property type="match status" value="2"/>
</dbReference>
<dbReference type="InterPro" id="IPR036259">
    <property type="entry name" value="MFS_trans_sf"/>
</dbReference>
<dbReference type="InterPro" id="IPR004768">
    <property type="entry name" value="Oligopep_transport"/>
</dbReference>
<dbReference type="InterPro" id="IPR000109">
    <property type="entry name" value="POT_fam"/>
</dbReference>
<dbReference type="InterPro" id="IPR018456">
    <property type="entry name" value="PTR2_symporter_CS"/>
</dbReference>
<dbReference type="NCBIfam" id="TIGR00926">
    <property type="entry name" value="2A1704"/>
    <property type="match status" value="1"/>
</dbReference>
<dbReference type="PANTHER" id="PTHR11654">
    <property type="entry name" value="OLIGOPEPTIDE TRANSPORTER-RELATED"/>
    <property type="match status" value="1"/>
</dbReference>
<dbReference type="Pfam" id="PF00854">
    <property type="entry name" value="PTR2"/>
    <property type="match status" value="2"/>
</dbReference>
<dbReference type="SUPFAM" id="SSF103473">
    <property type="entry name" value="MFS general substrate transporter"/>
    <property type="match status" value="1"/>
</dbReference>
<dbReference type="PROSITE" id="PS01022">
    <property type="entry name" value="PTR2_1"/>
    <property type="match status" value="1"/>
</dbReference>
<dbReference type="PROSITE" id="PS01023">
    <property type="entry name" value="PTR2_2"/>
    <property type="match status" value="1"/>
</dbReference>
<name>PEPT3_CAEEL</name>
<protein>
    <recommendedName>
        <fullName>Peptide transporter 3</fullName>
    </recommendedName>
    <alternativeName>
        <fullName>Oligopeptide transporter 3</fullName>
    </alternativeName>
</protein>
<comment type="function">
    <text evidence="2">Neuron-specific, H(+)-coupled oligopeptide transporter with broad specificity towards di- and tripeptides in a Na(+) and Cl(-)-independent manner. Shows H(+) channel activity in the absence of peptide substrates.</text>
</comment>
<comment type="subcellular location">
    <subcellularLocation>
        <location evidence="4">Membrane</location>
        <topology evidence="4">Multi-pass membrane protein</topology>
    </subcellularLocation>
</comment>
<comment type="tissue specificity">
    <text evidence="2">Expressed in the AVA interneuron.</text>
</comment>
<comment type="developmental stage">
    <text evidence="2">Expression is detected as early as the larval L1 stage and continues into the adult stage.</text>
</comment>
<comment type="similarity">
    <text evidence="4">Belongs to the major facilitator superfamily. Proton-dependent oligopeptide transporter (POT/PTR) (TC 2.A.17) family.</text>
</comment>
<feature type="chain" id="PRO_0000064315" description="Peptide transporter 3">
    <location>
        <begin position="1"/>
        <end position="701"/>
    </location>
</feature>
<feature type="transmembrane region" description="Helical" evidence="1">
    <location>
        <begin position="29"/>
        <end position="49"/>
    </location>
</feature>
<feature type="transmembrane region" description="Helical" evidence="1">
    <location>
        <begin position="55"/>
        <end position="75"/>
    </location>
</feature>
<feature type="transmembrane region" description="Helical" evidence="1">
    <location>
        <begin position="91"/>
        <end position="111"/>
    </location>
</feature>
<feature type="transmembrane region" description="Helical" evidence="1">
    <location>
        <begin position="119"/>
        <end position="139"/>
    </location>
</feature>
<feature type="transmembrane region" description="Helical" evidence="1">
    <location>
        <begin position="154"/>
        <end position="174"/>
    </location>
</feature>
<feature type="transmembrane region" description="Helical" evidence="1">
    <location>
        <begin position="188"/>
        <end position="208"/>
    </location>
</feature>
<feature type="transmembrane region" description="Helical" evidence="1">
    <location>
        <begin position="269"/>
        <end position="289"/>
    </location>
</feature>
<feature type="transmembrane region" description="Helical" evidence="1">
    <location>
        <begin position="318"/>
        <end position="338"/>
    </location>
</feature>
<feature type="transmembrane region" description="Helical" evidence="1">
    <location>
        <begin position="351"/>
        <end position="371"/>
    </location>
</feature>
<feature type="transmembrane region" description="Helical" evidence="1">
    <location>
        <begin position="575"/>
        <end position="595"/>
    </location>
</feature>
<feature type="transmembrane region" description="Helical" evidence="1">
    <location>
        <begin position="611"/>
        <end position="631"/>
    </location>
</feature>
<feature type="transmembrane region" description="Helical" evidence="1">
    <location>
        <begin position="641"/>
        <end position="661"/>
    </location>
</feature>
<feature type="glycosylation site" description="N-linked (GlcNAc...) asparagine" evidence="3">
    <location>
        <position position="391"/>
    </location>
</feature>
<feature type="glycosylation site" description="N-linked (GlcNAc...) asparagine" evidence="3">
    <location>
        <position position="432"/>
    </location>
</feature>
<feature type="sequence conflict" description="In Ref. 1; AAF66614." evidence="4" ref="1">
    <original>L</original>
    <variation>Q</variation>
    <location>
        <position position="205"/>
    </location>
</feature>